<feature type="chain" id="PRO_0000365805" description="Protein kintoun">
    <location>
        <begin position="1"/>
        <end position="845"/>
    </location>
</feature>
<feature type="region of interest" description="Disordered" evidence="3">
    <location>
        <begin position="362"/>
        <end position="420"/>
    </location>
</feature>
<feature type="region of interest" description="Disordered" evidence="3">
    <location>
        <begin position="575"/>
        <end position="691"/>
    </location>
</feature>
<feature type="region of interest" description="Disordered" evidence="3">
    <location>
        <begin position="773"/>
        <end position="845"/>
    </location>
</feature>
<feature type="compositionally biased region" description="Basic and acidic residues" evidence="3">
    <location>
        <begin position="362"/>
        <end position="382"/>
    </location>
</feature>
<feature type="compositionally biased region" description="Acidic residues" evidence="3">
    <location>
        <begin position="391"/>
        <end position="400"/>
    </location>
</feature>
<feature type="compositionally biased region" description="Basic and acidic residues" evidence="3">
    <location>
        <begin position="584"/>
        <end position="593"/>
    </location>
</feature>
<feature type="compositionally biased region" description="Basic residues" evidence="3">
    <location>
        <begin position="611"/>
        <end position="622"/>
    </location>
</feature>
<feature type="compositionally biased region" description="Polar residues" evidence="3">
    <location>
        <begin position="640"/>
        <end position="671"/>
    </location>
</feature>
<feature type="compositionally biased region" description="Polar residues" evidence="3">
    <location>
        <begin position="794"/>
        <end position="804"/>
    </location>
</feature>
<feature type="modified residue" description="Phosphoserine" evidence="1">
    <location>
        <position position="380"/>
    </location>
</feature>
<feature type="modified residue" description="Phosphoserine" evidence="1">
    <location>
        <position position="779"/>
    </location>
</feature>
<gene>
    <name evidence="2" type="primary">Nop17l</name>
    <name evidence="2" type="synonym">Ppi20</name>
    <name type="ORF">GG10709</name>
</gene>
<accession>B3N9E4</accession>
<comment type="function">
    <text evidence="2">Required for cytoplasmic pre-assembly of axonemal dyneins, thereby playing a central role in motility in cilia and flagella. Involved in pre-assembly of dynein arm complexes in the cytoplasm before intraflagellar transport loads them for the ciliary compartment.</text>
</comment>
<comment type="subunit">
    <text evidence="2">Interacts with Pp1alpha-96A, Pp1-87B, Pp1-13C and flw.</text>
</comment>
<comment type="subcellular location">
    <subcellularLocation>
        <location evidence="2">Cytoplasm</location>
    </subcellularLocation>
</comment>
<comment type="similarity">
    <text evidence="2">Belongs to the PIH1 family. Kintoun subfamily.</text>
</comment>
<evidence type="ECO:0000250" key="1">
    <source>
        <dbReference type="UniProtKB" id="Q0E9G3"/>
    </source>
</evidence>
<evidence type="ECO:0000255" key="2">
    <source>
        <dbReference type="HAMAP-Rule" id="MF_03069"/>
    </source>
</evidence>
<evidence type="ECO:0000256" key="3">
    <source>
        <dbReference type="SAM" id="MobiDB-lite"/>
    </source>
</evidence>
<protein>
    <recommendedName>
        <fullName evidence="2">Protein kintoun</fullName>
    </recommendedName>
    <alternativeName>
        <fullName evidence="2">Dynein assembly factor 2, axonemal homolog</fullName>
    </alternativeName>
    <alternativeName>
        <fullName evidence="2">PP1-interacting protein 20</fullName>
    </alternativeName>
</protein>
<name>KTU_DROER</name>
<dbReference type="EMBL" id="CH954177">
    <property type="protein sequence ID" value="EDV59631.1"/>
    <property type="molecule type" value="Genomic_DNA"/>
</dbReference>
<dbReference type="SMR" id="B3N9E4"/>
<dbReference type="EnsemblMetazoa" id="FBtr0130763">
    <property type="protein sequence ID" value="FBpp0129255"/>
    <property type="gene ID" value="FBgn0103014"/>
</dbReference>
<dbReference type="EnsemblMetazoa" id="XM_001970536.3">
    <property type="protein sequence ID" value="XP_001970572.1"/>
    <property type="gene ID" value="LOC6541773"/>
</dbReference>
<dbReference type="EnsemblMetazoa" id="XM_026979479.1">
    <property type="protein sequence ID" value="XP_026835280.1"/>
    <property type="gene ID" value="LOC6541773"/>
</dbReference>
<dbReference type="GeneID" id="6541773"/>
<dbReference type="KEGG" id="der:6541773"/>
<dbReference type="eggNOG" id="KOG4356">
    <property type="taxonomic scope" value="Eukaryota"/>
</dbReference>
<dbReference type="HOGENOM" id="CLU_012715_0_0_1"/>
<dbReference type="OMA" id="CFLNISK"/>
<dbReference type="OrthoDB" id="546764at2759"/>
<dbReference type="PhylomeDB" id="B3N9E4"/>
<dbReference type="Proteomes" id="UP000008711">
    <property type="component" value="Unassembled WGS sequence"/>
</dbReference>
<dbReference type="GO" id="GO:0005737">
    <property type="term" value="C:cytoplasm"/>
    <property type="evidence" value="ECO:0007669"/>
    <property type="project" value="UniProtKB-SubCell"/>
</dbReference>
<dbReference type="GO" id="GO:0008157">
    <property type="term" value="F:protein phosphatase 1 binding"/>
    <property type="evidence" value="ECO:0007669"/>
    <property type="project" value="EnsemblMetazoa"/>
</dbReference>
<dbReference type="GO" id="GO:0070286">
    <property type="term" value="P:axonemal dynein complex assembly"/>
    <property type="evidence" value="ECO:0007669"/>
    <property type="project" value="UniProtKB-UniRule"/>
</dbReference>
<dbReference type="GO" id="GO:0060285">
    <property type="term" value="P:cilium-dependent cell motility"/>
    <property type="evidence" value="ECO:0007669"/>
    <property type="project" value="UniProtKB-UniRule"/>
</dbReference>
<dbReference type="HAMAP" id="MF_03069">
    <property type="entry name" value="Kintoun"/>
    <property type="match status" value="1"/>
</dbReference>
<dbReference type="InterPro" id="IPR034727">
    <property type="entry name" value="Kintoun"/>
</dbReference>
<dbReference type="InterPro" id="IPR050734">
    <property type="entry name" value="PIH1/Kintoun_subfamily"/>
</dbReference>
<dbReference type="InterPro" id="IPR012981">
    <property type="entry name" value="PIH1_N"/>
</dbReference>
<dbReference type="InterPro" id="IPR041442">
    <property type="entry name" value="PIH1D1/2/3_CS-like"/>
</dbReference>
<dbReference type="PANTHER" id="PTHR22997">
    <property type="entry name" value="PIH1 DOMAIN-CONTAINING PROTEIN 1"/>
    <property type="match status" value="1"/>
</dbReference>
<dbReference type="PANTHER" id="PTHR22997:SF3">
    <property type="entry name" value="PROTEIN KINTOUN"/>
    <property type="match status" value="1"/>
</dbReference>
<dbReference type="Pfam" id="PF08190">
    <property type="entry name" value="PIH1"/>
    <property type="match status" value="1"/>
</dbReference>
<dbReference type="Pfam" id="PF18201">
    <property type="entry name" value="PIH1_CS"/>
    <property type="match status" value="1"/>
</dbReference>
<organism>
    <name type="scientific">Drosophila erecta</name>
    <name type="common">Fruit fly</name>
    <dbReference type="NCBI Taxonomy" id="7220"/>
    <lineage>
        <taxon>Eukaryota</taxon>
        <taxon>Metazoa</taxon>
        <taxon>Ecdysozoa</taxon>
        <taxon>Arthropoda</taxon>
        <taxon>Hexapoda</taxon>
        <taxon>Insecta</taxon>
        <taxon>Pterygota</taxon>
        <taxon>Neoptera</taxon>
        <taxon>Endopterygota</taxon>
        <taxon>Diptera</taxon>
        <taxon>Brachycera</taxon>
        <taxon>Muscomorpha</taxon>
        <taxon>Ephydroidea</taxon>
        <taxon>Drosophilidae</taxon>
        <taxon>Drosophila</taxon>
        <taxon>Sophophora</taxon>
    </lineage>
</organism>
<reference key="1">
    <citation type="journal article" date="2007" name="Nature">
        <title>Evolution of genes and genomes on the Drosophila phylogeny.</title>
        <authorList>
            <consortium name="Drosophila 12 genomes consortium"/>
        </authorList>
    </citation>
    <scope>NUCLEOTIDE SEQUENCE [LARGE SCALE GENOMIC DNA]</scope>
    <source>
        <strain>Tucson 14021-0224.01</strain>
    </source>
</reference>
<sequence>MSASATRSRNKQSKLRDDERLDISKDEFNRIQEAFGQEEFRKLFFDYVEEIQDPENRKIYEEEITQLEKERGVEVRFIHPKPGFVIKTALDGELKCFINIAGSEEIERPKNEVATDPSSGNRGLSWSIPMAQTSSRDDCDAKNNHCKVFDVVFHPDALHLAKRNKQFRQCLIDTALDAVEREYKVSLDRANLKFPKLDYKGIPRPTVIRKLADNPTAEEQEPHPLAHMFPTQPPAPGKPEPRVLPLKTKPTPVPEFTVPRYSIKHSHDVDLSEYTDELDAKLHVTVPRALVVEIELPLLRSTAECQLDVTSKSVYLFSERQGAKYRLKLDLPFTVDDKAGQARFDTDLRRLSITLPVVRKSSKEQAQMHETLRHFSREDSGVELHSNSESPVEEDPDGELSDSKADISDISSPTAAPVRHSNSPFLKSSVHYQLPSKFDCNVLDNVMAFVLHVPNVQPDSIEQLREQRSLHLQFATIGSGYYPTHYAFYVELPAEHEDSAIESVEAEAWDNNVVLKLCLTSQSETPASYLAGLDATELKEYPVHGQYNVKSKEKVIARKENAPFEIKFEHNQEGQALKVSIRPGTKEEEKENQDQEPEIDQQHQQQVQNKKPGKKQRKRNKKERSLSESACADMILQEPLTKNSELQPKSTFNLPQRKQRSYSECNDSTGGSHRGILKRFSRYGPRPSMSDSCSSIDDCSSYSCSVDASGTSLFSHSFGGIPEEDRSDAGLSESCKKTVRFNDHIMKQVFRLDSSILGQRKKNQKRRDLKLRAQHRRLSEGDSVDYEESRGSALKQQENQSRNCNKPKGVSVLHDSGLDLTGAPGAHSNNNESEAKNAMMFEMDD</sequence>
<proteinExistence type="inferred from homology"/>
<keyword id="KW-0963">Cytoplasm</keyword>
<keyword id="KW-0597">Phosphoprotein</keyword>